<gene>
    <name type="primary">HIR3</name>
    <name type="ordered locus">ABL081W</name>
</gene>
<keyword id="KW-0159">Chromosome partition</keyword>
<keyword id="KW-0539">Nucleus</keyword>
<keyword id="KW-1185">Reference proteome</keyword>
<keyword id="KW-0804">Transcription</keyword>
<keyword id="KW-0805">Transcription regulation</keyword>
<sequence>MSLFTALNSTPHDALLEAEEHSRELQVEESFRVFQSALFHLKAKRFDDAEAKFEQLFNIEVLKPDHWGLYRYSSPTLDLLRYLAYRNRGVFYYQYVREHAEELDKDDIVDYILKVVENLLQALQHSDGDAAVTGLLLQVFRGFKSKRLQRWILEYELTKQPEEMLLLGRGRALLPDTRGLVEEYRRVLRDVRSEPVTEFAARVLTLVKTDSLEVQPLPPVLDKIEQLKDEDDAMMKQLAEYEVNLEELSWECIAESFRSLVPKYKYTNFFSKAPDPYSEAGDPIECIKFVHNDKPIEQEVMEQLSVQNEREPFAATQAATEAPTLEKEGSENGGRTESKRDSELPSDSQRPAQRSSKRFKERSTETNEAELLRPHQDFAALFYSCTGILEVRLEIELSHLNPEAIPSTYPAYMPMLDFYECLNSWTSKHTEFLNQSETKGTSKNKGKGEDSFQLTSLLRSSMFTEENRPTISLTELPYKEVAEFISTVNSNRLHFHAVRLLLLQVLLTVRPDGSCLITDTFWSPILYDTIESFVLSLESNIYDLVYSQSEKYKGLGLSFCEVLMNSLGGIYTEIHAKKISGGKYGELEAQKNKLEKKIDRWVLLLDQLVFEGKLKFRYLWSKFCYLQCISDVTDDRIIHSLDYITHELRNSSMDIDISYANYEHTPRLNMETVQSQLSKIKMMRKFTMVNQMDVDRNDSSNEDQIEALSRVLVGTSLLDTPEDRSMSEFVNQAPFLLKIKLWRIVLHHYLAVKDQSNFQICYFKVLHVLYERLCSKEYSDQSQLQRQQTLLSTLSLMRSFTSLFIELLSGANEWVINDTSQASEYFKLLIDVFILLYPLTYFETLSQKSATTVSFFKKAAKSSVILKDMFVDISCLLVLYFTGACTQKEVVNGVEVATEFIHALHLLIGGFTFCDAANGNFLNLAEHFFCSVEGSSSFIPLKQILLCKYRLSLGGDANSFEDHGAKPQVLEMHNAVRLAKYLIRFEYQNKNPYLISTNRSNLKQVIENVIDVIGKIPYAENHILARNVYYFEQYLEAPVTAKIIQEALQGCISIELTKPRDNLQEIVDLGLYYISGVQLLNLYKVRKKTLQARPSELDSIIETLKADILYKTNRFETWFLLGKCYSYVVEDDLIWTSDRLVVASKKATTASIQRKAILCYLMALNLCQLSVDDPSLSEAQKMENAFIKREIYEVLALELLNAYFKPMEGLPFQRDIAPALVLTETGELVEPKNSPQPSISSANIYRATLLVFTNADEMYKDSQDALQNWLNPHYIANLRFKHEREDFITDGFDIIIRACNLAMKASTSNDNIIEPHYSLVIKCYKSVKHGWLRPEDALKHLLNDNSFLAQEANFYSHNPENSVQDFYRKIITLLRRLLALDKRKWHHRPTYRIARILFDDFNDVDGAIQEMGVLMALKSVNKNLVNIWKPEYERPGKHFVYTYQYVMFYLKLLSHKNDYISLGHAARKMRRFGSGMVNGSLATDKAVEMFINGARAALGINEKEHAELLLPTLNYQAFNRYSDELIASFNKENYSYEVLESLAISYQLKKGSSGIAFDGVCLSIYFKYLYLPWVEEHEAAEATQSMVKFVEINKNVNPTENETASPQPAAEPQKSTTKQVSSRKRVSKKDAFDKISQIVDKIT</sequence>
<comment type="function">
    <text evidence="1">Has a role in a nucleosome assembly pathway that is required for the integrity of heterochromatin and proper chromosome segregation.</text>
</comment>
<comment type="subcellular location">
    <subcellularLocation>
        <location evidence="1">Nucleus</location>
    </subcellularLocation>
</comment>
<comment type="similarity">
    <text evidence="3">Belongs to the HIR3 family.</text>
</comment>
<protein>
    <recommendedName>
        <fullName>Histone transcription regulator 3 homolog</fullName>
    </recommendedName>
</protein>
<proteinExistence type="inferred from homology"/>
<reference key="1">
    <citation type="journal article" date="2004" name="Science">
        <title>The Ashbya gossypii genome as a tool for mapping the ancient Saccharomyces cerevisiae genome.</title>
        <authorList>
            <person name="Dietrich F.S."/>
            <person name="Voegeli S."/>
            <person name="Brachat S."/>
            <person name="Lerch A."/>
            <person name="Gates K."/>
            <person name="Steiner S."/>
            <person name="Mohr C."/>
            <person name="Poehlmann R."/>
            <person name="Luedi P."/>
            <person name="Choi S."/>
            <person name="Wing R.A."/>
            <person name="Flavier A."/>
            <person name="Gaffney T.D."/>
            <person name="Philippsen P."/>
        </authorList>
    </citation>
    <scope>NUCLEOTIDE SEQUENCE [LARGE SCALE GENOMIC DNA]</scope>
    <source>
        <strain>ATCC 10895 / CBS 109.51 / FGSC 9923 / NRRL Y-1056</strain>
    </source>
</reference>
<reference key="2">
    <citation type="journal article" date="2013" name="G3 (Bethesda)">
        <title>Genomes of Ashbya fungi isolated from insects reveal four mating-type loci, numerous translocations, lack of transposons, and distinct gene duplications.</title>
        <authorList>
            <person name="Dietrich F.S."/>
            <person name="Voegeli S."/>
            <person name="Kuo S."/>
            <person name="Philippsen P."/>
        </authorList>
    </citation>
    <scope>GENOME REANNOTATION</scope>
    <scope>SEQUENCE REVISION TO 771; 926; 942; 1262-1267; 1277; 1309-1311; 1347; 1357 AND 1365-1368</scope>
    <source>
        <strain>ATCC 10895 / CBS 109.51 / FGSC 9923 / NRRL Y-1056</strain>
    </source>
</reference>
<dbReference type="EMBL" id="AE016815">
    <property type="protein sequence ID" value="AAS50690.2"/>
    <property type="molecule type" value="Genomic_DNA"/>
</dbReference>
<dbReference type="RefSeq" id="NP_982866.2">
    <property type="nucleotide sequence ID" value="NM_208219.2"/>
</dbReference>
<dbReference type="SMR" id="Q75DV4"/>
<dbReference type="FunCoup" id="Q75DV4">
    <property type="interactions" value="175"/>
</dbReference>
<dbReference type="STRING" id="284811.Q75DV4"/>
<dbReference type="EnsemblFungi" id="AAS50690">
    <property type="protein sequence ID" value="AAS50690"/>
    <property type="gene ID" value="AGOS_ABL081W"/>
</dbReference>
<dbReference type="GeneID" id="4618947"/>
<dbReference type="KEGG" id="ago:AGOS_ABL081W"/>
<dbReference type="eggNOG" id="ENOG502QQX4">
    <property type="taxonomic scope" value="Eukaryota"/>
</dbReference>
<dbReference type="HOGENOM" id="CLU_001316_0_0_1"/>
<dbReference type="InParanoid" id="Q75DV4"/>
<dbReference type="OMA" id="WETWYRL"/>
<dbReference type="OrthoDB" id="77564at2759"/>
<dbReference type="Proteomes" id="UP000000591">
    <property type="component" value="Chromosome II"/>
</dbReference>
<dbReference type="GO" id="GO:0000417">
    <property type="term" value="C:HIR complex"/>
    <property type="evidence" value="ECO:0000318"/>
    <property type="project" value="GO_Central"/>
</dbReference>
<dbReference type="GO" id="GO:0005634">
    <property type="term" value="C:nucleus"/>
    <property type="evidence" value="ECO:0000318"/>
    <property type="project" value="GO_Central"/>
</dbReference>
<dbReference type="GO" id="GO:0003677">
    <property type="term" value="F:DNA binding"/>
    <property type="evidence" value="ECO:0007669"/>
    <property type="project" value="EnsemblFungi"/>
</dbReference>
<dbReference type="GO" id="GO:0031491">
    <property type="term" value="F:nucleosome binding"/>
    <property type="evidence" value="ECO:0007669"/>
    <property type="project" value="EnsemblFungi"/>
</dbReference>
<dbReference type="GO" id="GO:0003714">
    <property type="term" value="F:transcription corepressor activity"/>
    <property type="evidence" value="ECO:0007669"/>
    <property type="project" value="EnsemblFungi"/>
</dbReference>
<dbReference type="GO" id="GO:0007059">
    <property type="term" value="P:chromosome segregation"/>
    <property type="evidence" value="ECO:0007669"/>
    <property type="project" value="UniProtKB-KW"/>
</dbReference>
<dbReference type="GO" id="GO:0000082">
    <property type="term" value="P:G1/S transition of mitotic cell cycle"/>
    <property type="evidence" value="ECO:0007669"/>
    <property type="project" value="EnsemblFungi"/>
</dbReference>
<dbReference type="GO" id="GO:1905268">
    <property type="term" value="P:negative regulation of chromatin organization"/>
    <property type="evidence" value="ECO:0007669"/>
    <property type="project" value="EnsemblFungi"/>
</dbReference>
<dbReference type="GO" id="GO:0000122">
    <property type="term" value="P:negative regulation of transcription by RNA polymerase II"/>
    <property type="evidence" value="ECO:0007669"/>
    <property type="project" value="EnsemblFungi"/>
</dbReference>
<dbReference type="GO" id="GO:0006334">
    <property type="term" value="P:nucleosome assembly"/>
    <property type="evidence" value="ECO:0007669"/>
    <property type="project" value="EnsemblFungi"/>
</dbReference>
<dbReference type="GO" id="GO:0006368">
    <property type="term" value="P:transcription elongation by RNA polymerase II"/>
    <property type="evidence" value="ECO:0007669"/>
    <property type="project" value="EnsemblFungi"/>
</dbReference>
<dbReference type="InterPro" id="IPR033053">
    <property type="entry name" value="Hir3/CABIN1"/>
</dbReference>
<dbReference type="PANTHER" id="PTHR15502">
    <property type="entry name" value="CALCINEURIN-BINDING PROTEIN CABIN 1-RELATED"/>
    <property type="match status" value="1"/>
</dbReference>
<dbReference type="PANTHER" id="PTHR15502:SF7">
    <property type="entry name" value="CALCINEURIN-BINDING PROTEIN CABIN-1"/>
    <property type="match status" value="1"/>
</dbReference>
<accession>Q75DV4</accession>
<feature type="chain" id="PRO_0000256193" description="Histone transcription regulator 3 homolog">
    <location>
        <begin position="1"/>
        <end position="1643"/>
    </location>
</feature>
<feature type="region of interest" description="Disordered" evidence="2">
    <location>
        <begin position="311"/>
        <end position="370"/>
    </location>
</feature>
<feature type="region of interest" description="Disordered" evidence="2">
    <location>
        <begin position="1598"/>
        <end position="1629"/>
    </location>
</feature>
<feature type="compositionally biased region" description="Basic and acidic residues" evidence="2">
    <location>
        <begin position="324"/>
        <end position="343"/>
    </location>
</feature>
<feature type="compositionally biased region" description="Polar residues" evidence="2">
    <location>
        <begin position="345"/>
        <end position="354"/>
    </location>
</feature>
<feature type="compositionally biased region" description="Basic and acidic residues" evidence="2">
    <location>
        <begin position="361"/>
        <end position="370"/>
    </location>
</feature>
<evidence type="ECO:0000250" key="1"/>
<evidence type="ECO:0000256" key="2">
    <source>
        <dbReference type="SAM" id="MobiDB-lite"/>
    </source>
</evidence>
<evidence type="ECO:0000305" key="3"/>
<organism>
    <name type="scientific">Eremothecium gossypii (strain ATCC 10895 / CBS 109.51 / FGSC 9923 / NRRL Y-1056)</name>
    <name type="common">Yeast</name>
    <name type="synonym">Ashbya gossypii</name>
    <dbReference type="NCBI Taxonomy" id="284811"/>
    <lineage>
        <taxon>Eukaryota</taxon>
        <taxon>Fungi</taxon>
        <taxon>Dikarya</taxon>
        <taxon>Ascomycota</taxon>
        <taxon>Saccharomycotina</taxon>
        <taxon>Saccharomycetes</taxon>
        <taxon>Saccharomycetales</taxon>
        <taxon>Saccharomycetaceae</taxon>
        <taxon>Eremothecium</taxon>
    </lineage>
</organism>
<name>HIR3_EREGS</name>